<dbReference type="EC" id="2.5.1.18"/>
<dbReference type="EMBL" id="X98055">
    <property type="protein sequence ID" value="CAA66665.1"/>
    <property type="molecule type" value="mRNA"/>
</dbReference>
<dbReference type="EMBL" id="AC142499">
    <property type="status" value="NOT_ANNOTATED_CDS"/>
    <property type="molecule type" value="Genomic_DNA"/>
</dbReference>
<dbReference type="EMBL" id="CH466553">
    <property type="protein sequence ID" value="EDL31888.1"/>
    <property type="molecule type" value="Genomic_DNA"/>
</dbReference>
<dbReference type="EMBL" id="BC012254">
    <property type="protein sequence ID" value="AAH12254.1"/>
    <property type="molecule type" value="mRNA"/>
</dbReference>
<dbReference type="EMBL" id="BC055020">
    <property type="protein sequence ID" value="AAH55020.1"/>
    <property type="molecule type" value="mRNA"/>
</dbReference>
<dbReference type="CCDS" id="CCDS23932.1"/>
<dbReference type="PIR" id="S71878">
    <property type="entry name" value="S71878"/>
</dbReference>
<dbReference type="RefSeq" id="NP_032211.3">
    <property type="nucleotide sequence ID" value="NM_008185.3"/>
</dbReference>
<dbReference type="SMR" id="Q64471"/>
<dbReference type="BioGRID" id="200102">
    <property type="interactions" value="5"/>
</dbReference>
<dbReference type="FunCoup" id="Q64471">
    <property type="interactions" value="1011"/>
</dbReference>
<dbReference type="STRING" id="10090.ENSMUSP00000001713"/>
<dbReference type="GlyGen" id="Q64471">
    <property type="glycosylation" value="1 site, 1 O-linked glycan (1 site)"/>
</dbReference>
<dbReference type="iPTMnet" id="Q64471"/>
<dbReference type="PhosphoSitePlus" id="Q64471"/>
<dbReference type="SwissPalm" id="Q64471"/>
<dbReference type="jPOST" id="Q64471"/>
<dbReference type="PaxDb" id="10090-ENSMUSP00000001713"/>
<dbReference type="PeptideAtlas" id="Q64471"/>
<dbReference type="ProteomicsDB" id="271357"/>
<dbReference type="Pumba" id="Q64471"/>
<dbReference type="DNASU" id="14871"/>
<dbReference type="Ensembl" id="ENSMUST00000001713.10">
    <property type="protein sequence ID" value="ENSMUSP00000001713.4"/>
    <property type="gene ID" value="ENSMUSG00000001663.11"/>
</dbReference>
<dbReference type="GeneID" id="14871"/>
<dbReference type="KEGG" id="mmu:14871"/>
<dbReference type="UCSC" id="uc007frc.2">
    <property type="organism name" value="mouse"/>
</dbReference>
<dbReference type="AGR" id="MGI:107379"/>
<dbReference type="CTD" id="2952"/>
<dbReference type="MGI" id="MGI:107379">
    <property type="gene designation" value="Gstt1"/>
</dbReference>
<dbReference type="VEuPathDB" id="HostDB:ENSMUSG00000001663"/>
<dbReference type="eggNOG" id="KOG0867">
    <property type="taxonomic scope" value="Eukaryota"/>
</dbReference>
<dbReference type="GeneTree" id="ENSGT00940000156366"/>
<dbReference type="InParanoid" id="Q64471"/>
<dbReference type="OMA" id="CQYRVDE"/>
<dbReference type="OrthoDB" id="422574at2759"/>
<dbReference type="PhylomeDB" id="Q64471"/>
<dbReference type="TreeFam" id="TF325759"/>
<dbReference type="Reactome" id="R-MMU-156590">
    <property type="pathway name" value="Glutathione conjugation"/>
</dbReference>
<dbReference type="Reactome" id="R-MMU-9753281">
    <property type="pathway name" value="Paracetamol ADME"/>
</dbReference>
<dbReference type="SABIO-RK" id="Q64471"/>
<dbReference type="BioGRID-ORCS" id="14871">
    <property type="hits" value="2 hits in 77 CRISPR screens"/>
</dbReference>
<dbReference type="PRO" id="PR:Q64471"/>
<dbReference type="Proteomes" id="UP000000589">
    <property type="component" value="Chromosome 10"/>
</dbReference>
<dbReference type="RNAct" id="Q64471">
    <property type="molecule type" value="protein"/>
</dbReference>
<dbReference type="Bgee" id="ENSMUSG00000001663">
    <property type="expression patterns" value="Expressed in left lobe of liver and 235 other cell types or tissues"/>
</dbReference>
<dbReference type="ExpressionAtlas" id="Q64471">
    <property type="expression patterns" value="baseline and differential"/>
</dbReference>
<dbReference type="GO" id="GO:0005829">
    <property type="term" value="C:cytosol"/>
    <property type="evidence" value="ECO:0000314"/>
    <property type="project" value="FlyBase"/>
</dbReference>
<dbReference type="GO" id="GO:0005634">
    <property type="term" value="C:nucleus"/>
    <property type="evidence" value="ECO:0007669"/>
    <property type="project" value="UniProtKB-SubCell"/>
</dbReference>
<dbReference type="GO" id="GO:0047651">
    <property type="term" value="F:alkylhalidase activity"/>
    <property type="evidence" value="ECO:0007669"/>
    <property type="project" value="Ensembl"/>
</dbReference>
<dbReference type="GO" id="GO:0004602">
    <property type="term" value="F:glutathione peroxidase activity"/>
    <property type="evidence" value="ECO:0007669"/>
    <property type="project" value="Ensembl"/>
</dbReference>
<dbReference type="GO" id="GO:0004364">
    <property type="term" value="F:glutathione transferase activity"/>
    <property type="evidence" value="ECO:0000314"/>
    <property type="project" value="UniProtKB"/>
</dbReference>
<dbReference type="GO" id="GO:0018900">
    <property type="term" value="P:dichloromethane metabolic process"/>
    <property type="evidence" value="ECO:0007669"/>
    <property type="project" value="Ensembl"/>
</dbReference>
<dbReference type="GO" id="GO:0006304">
    <property type="term" value="P:DNA modification"/>
    <property type="evidence" value="ECO:0007669"/>
    <property type="project" value="Ensembl"/>
</dbReference>
<dbReference type="GO" id="GO:0006749">
    <property type="term" value="P:glutathione metabolic process"/>
    <property type="evidence" value="ECO:0000314"/>
    <property type="project" value="UniProtKB"/>
</dbReference>
<dbReference type="GO" id="GO:0009751">
    <property type="term" value="P:response to salicylic acid"/>
    <property type="evidence" value="ECO:0007669"/>
    <property type="project" value="Ensembl"/>
</dbReference>
<dbReference type="GO" id="GO:0010269">
    <property type="term" value="P:response to selenium ion"/>
    <property type="evidence" value="ECO:0007669"/>
    <property type="project" value="Ensembl"/>
</dbReference>
<dbReference type="GO" id="GO:0033197">
    <property type="term" value="P:response to vitamin E"/>
    <property type="evidence" value="ECO:0007669"/>
    <property type="project" value="Ensembl"/>
</dbReference>
<dbReference type="CDD" id="cd03183">
    <property type="entry name" value="GST_C_Theta"/>
    <property type="match status" value="1"/>
</dbReference>
<dbReference type="CDD" id="cd03050">
    <property type="entry name" value="GST_N_Theta"/>
    <property type="match status" value="1"/>
</dbReference>
<dbReference type="FunFam" id="1.20.1050.10:FF:000008">
    <property type="entry name" value="Glutathione S-transferase theta-1"/>
    <property type="match status" value="1"/>
</dbReference>
<dbReference type="FunFam" id="3.40.30.10:FF:000086">
    <property type="entry name" value="Glutathione S-transferase theta-1"/>
    <property type="match status" value="1"/>
</dbReference>
<dbReference type="Gene3D" id="1.20.1050.10">
    <property type="match status" value="1"/>
</dbReference>
<dbReference type="Gene3D" id="3.40.30.10">
    <property type="entry name" value="Glutaredoxin"/>
    <property type="match status" value="1"/>
</dbReference>
<dbReference type="InterPro" id="IPR010987">
    <property type="entry name" value="Glutathione-S-Trfase_C-like"/>
</dbReference>
<dbReference type="InterPro" id="IPR036282">
    <property type="entry name" value="Glutathione-S-Trfase_C_sf"/>
</dbReference>
<dbReference type="InterPro" id="IPR040079">
    <property type="entry name" value="Glutathione_S-Trfase"/>
</dbReference>
<dbReference type="InterPro" id="IPR004045">
    <property type="entry name" value="Glutathione_S-Trfase_N"/>
</dbReference>
<dbReference type="InterPro" id="IPR004046">
    <property type="entry name" value="GST_C"/>
</dbReference>
<dbReference type="InterPro" id="IPR040077">
    <property type="entry name" value="GST_C_Theta"/>
</dbReference>
<dbReference type="InterPro" id="IPR040075">
    <property type="entry name" value="GST_N_Theta"/>
</dbReference>
<dbReference type="InterPro" id="IPR051369">
    <property type="entry name" value="GST_Theta"/>
</dbReference>
<dbReference type="InterPro" id="IPR036249">
    <property type="entry name" value="Thioredoxin-like_sf"/>
</dbReference>
<dbReference type="PANTHER" id="PTHR43917">
    <property type="match status" value="1"/>
</dbReference>
<dbReference type="PANTHER" id="PTHR43917:SF9">
    <property type="entry name" value="GLUTATHIONE S-TRANSFERASE THETA-1"/>
    <property type="match status" value="1"/>
</dbReference>
<dbReference type="Pfam" id="PF00043">
    <property type="entry name" value="GST_C"/>
    <property type="match status" value="1"/>
</dbReference>
<dbReference type="Pfam" id="PF02798">
    <property type="entry name" value="GST_N"/>
    <property type="match status" value="1"/>
</dbReference>
<dbReference type="SFLD" id="SFLDS00019">
    <property type="entry name" value="Glutathione_Transferase_(cytos"/>
    <property type="match status" value="1"/>
</dbReference>
<dbReference type="SFLD" id="SFLDG01153">
    <property type="entry name" value="Main.4:_Theta-like"/>
    <property type="match status" value="1"/>
</dbReference>
<dbReference type="SUPFAM" id="SSF47616">
    <property type="entry name" value="GST C-terminal domain-like"/>
    <property type="match status" value="1"/>
</dbReference>
<dbReference type="SUPFAM" id="SSF52833">
    <property type="entry name" value="Thioredoxin-like"/>
    <property type="match status" value="1"/>
</dbReference>
<dbReference type="PROSITE" id="PS50405">
    <property type="entry name" value="GST_CTER"/>
    <property type="match status" value="1"/>
</dbReference>
<dbReference type="PROSITE" id="PS50404">
    <property type="entry name" value="GST_NTER"/>
    <property type="match status" value="1"/>
</dbReference>
<keyword id="KW-0963">Cytoplasm</keyword>
<keyword id="KW-0539">Nucleus</keyword>
<keyword id="KW-1185">Reference proteome</keyword>
<keyword id="KW-0808">Transferase</keyword>
<organism>
    <name type="scientific">Mus musculus</name>
    <name type="common">Mouse</name>
    <dbReference type="NCBI Taxonomy" id="10090"/>
    <lineage>
        <taxon>Eukaryota</taxon>
        <taxon>Metazoa</taxon>
        <taxon>Chordata</taxon>
        <taxon>Craniata</taxon>
        <taxon>Vertebrata</taxon>
        <taxon>Euteleostomi</taxon>
        <taxon>Mammalia</taxon>
        <taxon>Eutheria</taxon>
        <taxon>Euarchontoglires</taxon>
        <taxon>Glires</taxon>
        <taxon>Rodentia</taxon>
        <taxon>Myomorpha</taxon>
        <taxon>Muroidea</taxon>
        <taxon>Muridae</taxon>
        <taxon>Murinae</taxon>
        <taxon>Mus</taxon>
        <taxon>Mus</taxon>
    </lineage>
</organism>
<accession>Q64471</accession>
<accession>Q91X50</accession>
<comment type="function">
    <text evidence="2">Conjugation of reduced glutathione to a wide number of exogenous and endogenous hydrophobic electrophiles. Also binds steroids, bilirubin, carcinogens and numerous organic anions. Has dichloromethane dehalogenase activity.</text>
</comment>
<comment type="catalytic activity">
    <reaction evidence="2">
        <text>RX + glutathione = an S-substituted glutathione + a halide anion + H(+)</text>
        <dbReference type="Rhea" id="RHEA:16437"/>
        <dbReference type="ChEBI" id="CHEBI:15378"/>
        <dbReference type="ChEBI" id="CHEBI:16042"/>
        <dbReference type="ChEBI" id="CHEBI:17792"/>
        <dbReference type="ChEBI" id="CHEBI:57925"/>
        <dbReference type="ChEBI" id="CHEBI:90779"/>
        <dbReference type="EC" id="2.5.1.18"/>
    </reaction>
</comment>
<comment type="subunit">
    <text>Homodimer.</text>
</comment>
<comment type="subcellular location">
    <subcellularLocation>
        <location>Cytoplasm</location>
    </subcellularLocation>
    <subcellularLocation>
        <location>Nucleus</location>
    </subcellularLocation>
</comment>
<comment type="tissue specificity">
    <text>In liver, highest expression found in central vein limiting plate hepatocytes. Also expressed in interlobular bile duct epithelial cells. In lung, expressed in club cells and ciliated cells of the bronchiolar epithelium and in type II alveolar cells of the lung parenchyma.</text>
</comment>
<comment type="similarity">
    <text evidence="3">Belongs to the GST superfamily. Theta family.</text>
</comment>
<feature type="chain" id="PRO_0000185940" description="Glutathione S-transferase theta-1">
    <location>
        <begin position="1"/>
        <end position="240"/>
    </location>
</feature>
<feature type="domain" description="GST N-terminal">
    <location>
        <begin position="2"/>
        <end position="82"/>
    </location>
</feature>
<feature type="domain" description="GST C-terminal">
    <location>
        <begin position="88"/>
        <end position="222"/>
    </location>
</feature>
<feature type="binding site" evidence="1">
    <location>
        <position position="40"/>
    </location>
    <ligand>
        <name>glutathione</name>
        <dbReference type="ChEBI" id="CHEBI:57925"/>
    </ligand>
</feature>
<feature type="binding site" evidence="1">
    <location>
        <begin position="53"/>
        <end position="54"/>
    </location>
    <ligand>
        <name>glutathione</name>
        <dbReference type="ChEBI" id="CHEBI:57925"/>
    </ligand>
</feature>
<feature type="binding site" evidence="1">
    <location>
        <begin position="66"/>
        <end position="67"/>
    </location>
    <ligand>
        <name>glutathione</name>
        <dbReference type="ChEBI" id="CHEBI:57925"/>
    </ligand>
</feature>
<feature type="mutagenesis site" description="Strongly reduced catalytic activity." evidence="2">
    <original>R</original>
    <variation>W</variation>
    <location>
        <position position="234"/>
    </location>
</feature>
<feature type="sequence conflict" description="In Ref. 1; CAA66665." evidence="3" ref="1">
    <original>R</original>
    <variation>K</variation>
    <location>
        <position position="53"/>
    </location>
</feature>
<feature type="sequence conflict" description="In Ref. 1; CAA66665." evidence="3" ref="1">
    <original>A</original>
    <variation>T</variation>
    <location>
        <position position="237"/>
    </location>
</feature>
<sequence length="240" mass="27374">MVLELYLDLLSQPCRAIYIFAKKNNIPFQMHTVELRKGEHLSDAFARVNPMKRVPAMMDGGFTLCESVAILLYLAHKYKVPDHWYPQDLQARARVDEYLAWQHTGLRRSCLRALWHKVMFPVFLGEQIPPETLAATLAELDVNLQVLEDKFLQDKDFLVGPHISLADLVAITELMHPVGGGCPVFEGHPRLAAWYQRVEAAVGKDLFREAHEVILKVKDCPPADLIIKQKLMPRVLAMIQ</sequence>
<protein>
    <recommendedName>
        <fullName>Glutathione S-transferase theta-1</fullName>
        <ecNumber>2.5.1.18</ecNumber>
    </recommendedName>
    <alternativeName>
        <fullName>GST class-theta-1</fullName>
    </alternativeName>
</protein>
<reference key="1">
    <citation type="journal article" date="1996" name="Biochem. J.">
        <title>The distribution of theta-class glutathione S-transferases in the liver and lung of mouse, rat and human.</title>
        <authorList>
            <person name="Mainwaring G.W."/>
            <person name="Williams S.M."/>
            <person name="Foster J.R."/>
            <person name="Tugwood J."/>
            <person name="Green T."/>
        </authorList>
    </citation>
    <scope>NUCLEOTIDE SEQUENCE [MRNA]</scope>
    <source>
        <strain>C57BL/6 X C3H</strain>
        <tissue>Liver</tissue>
        <tissue>Lung</tissue>
    </source>
</reference>
<reference key="2">
    <citation type="journal article" date="2009" name="PLoS Biol.">
        <title>Lineage-specific biology revealed by a finished genome assembly of the mouse.</title>
        <authorList>
            <person name="Church D.M."/>
            <person name="Goodstadt L."/>
            <person name="Hillier L.W."/>
            <person name="Zody M.C."/>
            <person name="Goldstein S."/>
            <person name="She X."/>
            <person name="Bult C.J."/>
            <person name="Agarwala R."/>
            <person name="Cherry J.L."/>
            <person name="DiCuccio M."/>
            <person name="Hlavina W."/>
            <person name="Kapustin Y."/>
            <person name="Meric P."/>
            <person name="Maglott D."/>
            <person name="Birtle Z."/>
            <person name="Marques A.C."/>
            <person name="Graves T."/>
            <person name="Zhou S."/>
            <person name="Teague B."/>
            <person name="Potamousis K."/>
            <person name="Churas C."/>
            <person name="Place M."/>
            <person name="Herschleb J."/>
            <person name="Runnheim R."/>
            <person name="Forrest D."/>
            <person name="Amos-Landgraf J."/>
            <person name="Schwartz D.C."/>
            <person name="Cheng Z."/>
            <person name="Lindblad-Toh K."/>
            <person name="Eichler E.E."/>
            <person name="Ponting C.P."/>
        </authorList>
    </citation>
    <scope>NUCLEOTIDE SEQUENCE [LARGE SCALE GENOMIC DNA]</scope>
    <source>
        <strain>C57BL/6J</strain>
    </source>
</reference>
<reference key="3">
    <citation type="submission" date="2005-07" db="EMBL/GenBank/DDBJ databases">
        <authorList>
            <person name="Mural R.J."/>
            <person name="Adams M.D."/>
            <person name="Myers E.W."/>
            <person name="Smith H.O."/>
            <person name="Venter J.C."/>
        </authorList>
    </citation>
    <scope>NUCLEOTIDE SEQUENCE [LARGE SCALE GENOMIC DNA]</scope>
</reference>
<reference key="4">
    <citation type="journal article" date="2004" name="Genome Res.">
        <title>The status, quality, and expansion of the NIH full-length cDNA project: the Mammalian Gene Collection (MGC).</title>
        <authorList>
            <consortium name="The MGC Project Team"/>
        </authorList>
    </citation>
    <scope>NUCLEOTIDE SEQUENCE [LARGE SCALE MRNA]</scope>
    <source>
        <strain>FVB/N</strain>
        <tissue>Liver</tissue>
        <tissue>Salivary gland</tissue>
    </source>
</reference>
<reference key="5">
    <citation type="journal article" date="2010" name="Biochim. Biophys. Acta">
        <title>Residue 234 is a master switch of the alternative-substrate activity profile of human and rodent theta class glutathione transferase T1-1.</title>
        <authorList>
            <person name="Shokeer A."/>
            <person name="Mannervik B."/>
        </authorList>
    </citation>
    <scope>FUNCTION</scope>
    <scope>CATALYTIC ACTIVITY</scope>
    <scope>MUTAGENESIS OF ARG-234</scope>
</reference>
<reference key="6">
    <citation type="journal article" date="2010" name="Cell">
        <title>A tissue-specific atlas of mouse protein phosphorylation and expression.</title>
        <authorList>
            <person name="Huttlin E.L."/>
            <person name="Jedrychowski M.P."/>
            <person name="Elias J.E."/>
            <person name="Goswami T."/>
            <person name="Rad R."/>
            <person name="Beausoleil S.A."/>
            <person name="Villen J."/>
            <person name="Haas W."/>
            <person name="Sowa M.E."/>
            <person name="Gygi S.P."/>
        </authorList>
    </citation>
    <scope>IDENTIFICATION BY MASS SPECTROMETRY [LARGE SCALE ANALYSIS]</scope>
    <source>
        <tissue>Brain</tissue>
        <tissue>Brown adipose tissue</tissue>
        <tissue>Heart</tissue>
        <tissue>Kidney</tissue>
        <tissue>Liver</tissue>
        <tissue>Lung</tissue>
        <tissue>Pancreas</tissue>
        <tissue>Testis</tissue>
    </source>
</reference>
<proteinExistence type="evidence at protein level"/>
<name>GSTT1_MOUSE</name>
<gene>
    <name type="primary">Gstt1</name>
</gene>
<evidence type="ECO:0000250" key="1"/>
<evidence type="ECO:0000269" key="2">
    <source>
    </source>
</evidence>
<evidence type="ECO:0000305" key="3"/>